<sequence length="358" mass="40876">MSIIDKLSLVEKTYEDIVQKLNDANIKDNRVIQDLMKKKSEIEDIVEEYKKLKVVLKEIEESNEMVNNPDTDKELKDMALLEIEDLNQKKEDIVNGLRLLLLPKDKNDGKNIIVEIRVGTGGDESALFVGDLFRMYTRFIERTNLKMEIIDTSPTELGGYKEVIFSVSGKDAYRTLKFESGTHRVQRIPATESGGRIHTSASTVAVMPEAMESDVVIKDEDIRVDIFRSSGPGGQSVNTTDSAVRITHLPTGLVVQCQDEKSQHKNKAKALKVLRARIYEKEEAERKAKEAKERREQIGSGDRSERIRTYNFPQNRVTDHRINVTLYKLDRFMDGEITEITDALFKKEQEDMLASYSD</sequence>
<dbReference type="EMBL" id="CP001357">
    <property type="protein sequence ID" value="ACN84687.1"/>
    <property type="molecule type" value="Genomic_DNA"/>
</dbReference>
<dbReference type="RefSeq" id="WP_012671719.1">
    <property type="nucleotide sequence ID" value="NC_012225.1"/>
</dbReference>
<dbReference type="SMR" id="C0QWA1"/>
<dbReference type="STRING" id="565034.BHWA1_02231"/>
<dbReference type="KEGG" id="bhy:BHWA1_02231"/>
<dbReference type="eggNOG" id="COG0216">
    <property type="taxonomic scope" value="Bacteria"/>
</dbReference>
<dbReference type="HOGENOM" id="CLU_036856_0_1_12"/>
<dbReference type="Proteomes" id="UP000001803">
    <property type="component" value="Chromosome"/>
</dbReference>
<dbReference type="GO" id="GO:0005737">
    <property type="term" value="C:cytoplasm"/>
    <property type="evidence" value="ECO:0007669"/>
    <property type="project" value="UniProtKB-SubCell"/>
</dbReference>
<dbReference type="GO" id="GO:0016149">
    <property type="term" value="F:translation release factor activity, codon specific"/>
    <property type="evidence" value="ECO:0007669"/>
    <property type="project" value="UniProtKB-UniRule"/>
</dbReference>
<dbReference type="FunFam" id="3.30.160.20:FF:000004">
    <property type="entry name" value="Peptide chain release factor 1"/>
    <property type="match status" value="1"/>
</dbReference>
<dbReference type="FunFam" id="3.30.70.1660:FF:000002">
    <property type="entry name" value="Peptide chain release factor 1"/>
    <property type="match status" value="1"/>
</dbReference>
<dbReference type="FunFam" id="3.30.70.1660:FF:000004">
    <property type="entry name" value="Peptide chain release factor 1"/>
    <property type="match status" value="1"/>
</dbReference>
<dbReference type="Gene3D" id="3.30.160.20">
    <property type="match status" value="1"/>
</dbReference>
<dbReference type="Gene3D" id="3.30.70.1660">
    <property type="match status" value="1"/>
</dbReference>
<dbReference type="Gene3D" id="6.10.140.1950">
    <property type="match status" value="1"/>
</dbReference>
<dbReference type="HAMAP" id="MF_00093">
    <property type="entry name" value="Rel_fac_1"/>
    <property type="match status" value="1"/>
</dbReference>
<dbReference type="InterPro" id="IPR005139">
    <property type="entry name" value="PCRF"/>
</dbReference>
<dbReference type="InterPro" id="IPR000352">
    <property type="entry name" value="Pep_chain_release_fac_I"/>
</dbReference>
<dbReference type="InterPro" id="IPR045853">
    <property type="entry name" value="Pep_chain_release_fac_I_sf"/>
</dbReference>
<dbReference type="InterPro" id="IPR050057">
    <property type="entry name" value="Prokaryotic/Mito_RF"/>
</dbReference>
<dbReference type="InterPro" id="IPR004373">
    <property type="entry name" value="RF-1"/>
</dbReference>
<dbReference type="NCBIfam" id="TIGR00019">
    <property type="entry name" value="prfA"/>
    <property type="match status" value="1"/>
</dbReference>
<dbReference type="NCBIfam" id="NF001859">
    <property type="entry name" value="PRK00591.1"/>
    <property type="match status" value="1"/>
</dbReference>
<dbReference type="PANTHER" id="PTHR43804">
    <property type="entry name" value="LD18447P"/>
    <property type="match status" value="1"/>
</dbReference>
<dbReference type="PANTHER" id="PTHR43804:SF7">
    <property type="entry name" value="LD18447P"/>
    <property type="match status" value="1"/>
</dbReference>
<dbReference type="Pfam" id="PF03462">
    <property type="entry name" value="PCRF"/>
    <property type="match status" value="1"/>
</dbReference>
<dbReference type="Pfam" id="PF00472">
    <property type="entry name" value="RF-1"/>
    <property type="match status" value="1"/>
</dbReference>
<dbReference type="SMART" id="SM00937">
    <property type="entry name" value="PCRF"/>
    <property type="match status" value="1"/>
</dbReference>
<dbReference type="SUPFAM" id="SSF75620">
    <property type="entry name" value="Release factor"/>
    <property type="match status" value="1"/>
</dbReference>
<dbReference type="PROSITE" id="PS00745">
    <property type="entry name" value="RF_PROK_I"/>
    <property type="match status" value="1"/>
</dbReference>
<accession>C0QWA1</accession>
<proteinExistence type="inferred from homology"/>
<name>RF1_BRAHW</name>
<feature type="chain" id="PRO_1000193473" description="Peptide chain release factor 1">
    <location>
        <begin position="1"/>
        <end position="358"/>
    </location>
</feature>
<feature type="modified residue" description="N5-methylglutamine" evidence="1">
    <location>
        <position position="235"/>
    </location>
</feature>
<organism>
    <name type="scientific">Brachyspira hyodysenteriae (strain ATCC 49526 / WA1)</name>
    <dbReference type="NCBI Taxonomy" id="565034"/>
    <lineage>
        <taxon>Bacteria</taxon>
        <taxon>Pseudomonadati</taxon>
        <taxon>Spirochaetota</taxon>
        <taxon>Spirochaetia</taxon>
        <taxon>Brachyspirales</taxon>
        <taxon>Brachyspiraceae</taxon>
        <taxon>Brachyspira</taxon>
    </lineage>
</organism>
<keyword id="KW-0963">Cytoplasm</keyword>
<keyword id="KW-0488">Methylation</keyword>
<keyword id="KW-0648">Protein biosynthesis</keyword>
<evidence type="ECO:0000255" key="1">
    <source>
        <dbReference type="HAMAP-Rule" id="MF_00093"/>
    </source>
</evidence>
<reference key="1">
    <citation type="journal article" date="2009" name="PLoS ONE">
        <title>Genome sequence of the pathogenic intestinal spirochete Brachyspira hyodysenteriae reveals adaptations to its lifestyle in the porcine large intestine.</title>
        <authorList>
            <person name="Bellgard M.I."/>
            <person name="Wanchanthuek P."/>
            <person name="La T."/>
            <person name="Ryan K."/>
            <person name="Moolhuijzen P."/>
            <person name="Albertyn Z."/>
            <person name="Shaban B."/>
            <person name="Motro Y."/>
            <person name="Dunn D.S."/>
            <person name="Schibeci D."/>
            <person name="Hunter A."/>
            <person name="Barrero R."/>
            <person name="Phillips N.D."/>
            <person name="Hampson D.J."/>
        </authorList>
    </citation>
    <scope>NUCLEOTIDE SEQUENCE [LARGE SCALE GENOMIC DNA]</scope>
    <source>
        <strain>ATCC 49526 / WA1</strain>
    </source>
</reference>
<protein>
    <recommendedName>
        <fullName evidence="1">Peptide chain release factor 1</fullName>
        <shortName evidence="1">RF-1</shortName>
    </recommendedName>
</protein>
<comment type="function">
    <text evidence="1">Peptide chain release factor 1 directs the termination of translation in response to the peptide chain termination codons UAG and UAA.</text>
</comment>
<comment type="subcellular location">
    <subcellularLocation>
        <location evidence="1">Cytoplasm</location>
    </subcellularLocation>
</comment>
<comment type="PTM">
    <text evidence="1">Methylated by PrmC. Methylation increases the termination efficiency of RF1.</text>
</comment>
<comment type="similarity">
    <text evidence="1">Belongs to the prokaryotic/mitochondrial release factor family.</text>
</comment>
<gene>
    <name evidence="1" type="primary">prfA</name>
    <name type="ordered locus">BHWA1_02231</name>
</gene>